<gene>
    <name evidence="1" type="primary">astD</name>
    <name type="ordered locus">Shewana3_0612</name>
</gene>
<keyword id="KW-0056">Arginine metabolism</keyword>
<keyword id="KW-0520">NAD</keyword>
<keyword id="KW-0560">Oxidoreductase</keyword>
<evidence type="ECO:0000255" key="1">
    <source>
        <dbReference type="HAMAP-Rule" id="MF_01174"/>
    </source>
</evidence>
<evidence type="ECO:0000256" key="2">
    <source>
        <dbReference type="SAM" id="MobiDB-lite"/>
    </source>
</evidence>
<feature type="chain" id="PRO_1000065767" description="N-succinylglutamate 5-semialdehyde dehydrogenase">
    <location>
        <begin position="1"/>
        <end position="487"/>
    </location>
</feature>
<feature type="region of interest" description="Disordered" evidence="2">
    <location>
        <begin position="1"/>
        <end position="23"/>
    </location>
</feature>
<feature type="active site" evidence="1">
    <location>
        <position position="243"/>
    </location>
</feature>
<feature type="active site" evidence="1">
    <location>
        <position position="277"/>
    </location>
</feature>
<feature type="binding site" evidence="1">
    <location>
        <begin position="220"/>
        <end position="225"/>
    </location>
    <ligand>
        <name>NAD(+)</name>
        <dbReference type="ChEBI" id="CHEBI:57540"/>
    </ligand>
</feature>
<organism>
    <name type="scientific">Shewanella sp. (strain ANA-3)</name>
    <dbReference type="NCBI Taxonomy" id="94122"/>
    <lineage>
        <taxon>Bacteria</taxon>
        <taxon>Pseudomonadati</taxon>
        <taxon>Pseudomonadota</taxon>
        <taxon>Gammaproteobacteria</taxon>
        <taxon>Alteromonadales</taxon>
        <taxon>Shewanellaceae</taxon>
        <taxon>Shewanella</taxon>
    </lineage>
</organism>
<dbReference type="EC" id="1.2.1.71" evidence="1"/>
<dbReference type="EMBL" id="CP000469">
    <property type="protein sequence ID" value="ABK46851.1"/>
    <property type="molecule type" value="Genomic_DNA"/>
</dbReference>
<dbReference type="RefSeq" id="WP_011715800.1">
    <property type="nucleotide sequence ID" value="NC_008577.1"/>
</dbReference>
<dbReference type="SMR" id="A0KST2"/>
<dbReference type="STRING" id="94122.Shewana3_0612"/>
<dbReference type="KEGG" id="shn:Shewana3_0612"/>
<dbReference type="eggNOG" id="COG1012">
    <property type="taxonomic scope" value="Bacteria"/>
</dbReference>
<dbReference type="HOGENOM" id="CLU_005391_1_0_6"/>
<dbReference type="OrthoDB" id="9812625at2"/>
<dbReference type="UniPathway" id="UPA00185">
    <property type="reaction ID" value="UER00282"/>
</dbReference>
<dbReference type="Proteomes" id="UP000002589">
    <property type="component" value="Chromosome"/>
</dbReference>
<dbReference type="GO" id="GO:0043824">
    <property type="term" value="F:succinylglutamate-semialdehyde dehydrogenase activity"/>
    <property type="evidence" value="ECO:0007669"/>
    <property type="project" value="UniProtKB-EC"/>
</dbReference>
<dbReference type="GO" id="GO:0019544">
    <property type="term" value="P:arginine catabolic process to glutamate"/>
    <property type="evidence" value="ECO:0007669"/>
    <property type="project" value="UniProtKB-UniRule"/>
</dbReference>
<dbReference type="GO" id="GO:0019545">
    <property type="term" value="P:arginine catabolic process to succinate"/>
    <property type="evidence" value="ECO:0007669"/>
    <property type="project" value="UniProtKB-UniRule"/>
</dbReference>
<dbReference type="CDD" id="cd07095">
    <property type="entry name" value="ALDH_SGSD_AstD"/>
    <property type="match status" value="1"/>
</dbReference>
<dbReference type="FunFam" id="3.40.309.10:FF:000013">
    <property type="entry name" value="N-succinylglutamate 5-semialdehyde dehydrogenase"/>
    <property type="match status" value="1"/>
</dbReference>
<dbReference type="FunFam" id="3.40.605.10:FF:000010">
    <property type="entry name" value="N-succinylglutamate 5-semialdehyde dehydrogenase"/>
    <property type="match status" value="1"/>
</dbReference>
<dbReference type="Gene3D" id="3.40.605.10">
    <property type="entry name" value="Aldehyde Dehydrogenase, Chain A, domain 1"/>
    <property type="match status" value="1"/>
</dbReference>
<dbReference type="Gene3D" id="3.40.309.10">
    <property type="entry name" value="Aldehyde Dehydrogenase, Chain A, domain 2"/>
    <property type="match status" value="1"/>
</dbReference>
<dbReference type="HAMAP" id="MF_01174">
    <property type="entry name" value="Aldedh_AstD"/>
    <property type="match status" value="1"/>
</dbReference>
<dbReference type="InterPro" id="IPR016161">
    <property type="entry name" value="Ald_DH/histidinol_DH"/>
</dbReference>
<dbReference type="InterPro" id="IPR016163">
    <property type="entry name" value="Ald_DH_C"/>
</dbReference>
<dbReference type="InterPro" id="IPR016160">
    <property type="entry name" value="Ald_DH_CS_CYS"/>
</dbReference>
<dbReference type="InterPro" id="IPR029510">
    <property type="entry name" value="Ald_DH_CS_GLU"/>
</dbReference>
<dbReference type="InterPro" id="IPR016162">
    <property type="entry name" value="Ald_DH_N"/>
</dbReference>
<dbReference type="InterPro" id="IPR015590">
    <property type="entry name" value="Aldehyde_DH_dom"/>
</dbReference>
<dbReference type="InterPro" id="IPR017649">
    <property type="entry name" value="SuccinylGlu_semiald_DH_AstD"/>
</dbReference>
<dbReference type="NCBIfam" id="TIGR03240">
    <property type="entry name" value="arg_catab_astD"/>
    <property type="match status" value="1"/>
</dbReference>
<dbReference type="NCBIfam" id="NF006992">
    <property type="entry name" value="PRK09457.1"/>
    <property type="match status" value="1"/>
</dbReference>
<dbReference type="PANTHER" id="PTHR11699">
    <property type="entry name" value="ALDEHYDE DEHYDROGENASE-RELATED"/>
    <property type="match status" value="1"/>
</dbReference>
<dbReference type="Pfam" id="PF00171">
    <property type="entry name" value="Aldedh"/>
    <property type="match status" value="1"/>
</dbReference>
<dbReference type="SUPFAM" id="SSF53720">
    <property type="entry name" value="ALDH-like"/>
    <property type="match status" value="1"/>
</dbReference>
<dbReference type="PROSITE" id="PS00070">
    <property type="entry name" value="ALDEHYDE_DEHYDR_CYS"/>
    <property type="match status" value="1"/>
</dbReference>
<dbReference type="PROSITE" id="PS00687">
    <property type="entry name" value="ALDEHYDE_DEHYDR_GLU"/>
    <property type="match status" value="1"/>
</dbReference>
<proteinExistence type="inferred from homology"/>
<reference key="1">
    <citation type="submission" date="2006-09" db="EMBL/GenBank/DDBJ databases">
        <title>Complete sequence of chromosome 1 of Shewanella sp. ANA-3.</title>
        <authorList>
            <person name="Copeland A."/>
            <person name="Lucas S."/>
            <person name="Lapidus A."/>
            <person name="Barry K."/>
            <person name="Detter J.C."/>
            <person name="Glavina del Rio T."/>
            <person name="Hammon N."/>
            <person name="Israni S."/>
            <person name="Dalin E."/>
            <person name="Tice H."/>
            <person name="Pitluck S."/>
            <person name="Chertkov O."/>
            <person name="Brettin T."/>
            <person name="Bruce D."/>
            <person name="Han C."/>
            <person name="Tapia R."/>
            <person name="Gilna P."/>
            <person name="Schmutz J."/>
            <person name="Larimer F."/>
            <person name="Land M."/>
            <person name="Hauser L."/>
            <person name="Kyrpides N."/>
            <person name="Kim E."/>
            <person name="Newman D."/>
            <person name="Salticov C."/>
            <person name="Konstantinidis K."/>
            <person name="Klappenback J."/>
            <person name="Tiedje J."/>
            <person name="Richardson P."/>
        </authorList>
    </citation>
    <scope>NUCLEOTIDE SEQUENCE [LARGE SCALE GENOMIC DNA]</scope>
    <source>
        <strain>ANA-3</strain>
    </source>
</reference>
<name>ASTD_SHESA</name>
<accession>A0KST2</accession>
<sequence>MTHFIKGQWQAGKGHDVTSSNPANSEIIWRGQTATAEQVNAAVDAAREAQFDWFMLGFDGRLKIVEAYRSQLEANKAELAETIAQETGKPQWETATEVAAMIGKIGLSATAYNKRTGTEANDTPAGRAVLRHKPHGVVAVFGPYNFPGHLPNGHIVPALLAGNTVVFKPSELTPKVAELMVSLWEKAGLPAGVINLVQGEVDTGKALASHPQLDGLFFTGSSRTGHLLHQQYAGHPGKILALEMGGNNPLIIKGVADIKAAVHDILQSAYISSGQRCTCARRLYVEQGEQGDALVAKLVEAVKQIKVGPWNAQPQPFMGSMISEAAAKGMVAAQANLQNLGGVSLVELSHLQAGTGLVSPGLIDVTAVGELPDEEYFGPLLQLVRYSDFDQAIKLANQTRYGLSAGILADSRDDYEYFLARIRAGIVNWNKQITGASGAAPFGGVGASGNHRASAFYAADYCAYPVASVEADAVSLPASLSPGLSLE</sequence>
<comment type="function">
    <text evidence="1">Catalyzes the NAD-dependent reduction of succinylglutamate semialdehyde into succinylglutamate.</text>
</comment>
<comment type="catalytic activity">
    <reaction evidence="1">
        <text>N-succinyl-L-glutamate 5-semialdehyde + NAD(+) + H2O = N-succinyl-L-glutamate + NADH + 2 H(+)</text>
        <dbReference type="Rhea" id="RHEA:10812"/>
        <dbReference type="ChEBI" id="CHEBI:15377"/>
        <dbReference type="ChEBI" id="CHEBI:15378"/>
        <dbReference type="ChEBI" id="CHEBI:57540"/>
        <dbReference type="ChEBI" id="CHEBI:57945"/>
        <dbReference type="ChEBI" id="CHEBI:58520"/>
        <dbReference type="ChEBI" id="CHEBI:58763"/>
        <dbReference type="EC" id="1.2.1.71"/>
    </reaction>
</comment>
<comment type="pathway">
    <text evidence="1">Amino-acid degradation; L-arginine degradation via AST pathway; L-glutamate and succinate from L-arginine: step 4/5.</text>
</comment>
<comment type="similarity">
    <text evidence="1">Belongs to the aldehyde dehydrogenase family. AstD subfamily.</text>
</comment>
<protein>
    <recommendedName>
        <fullName evidence="1">N-succinylglutamate 5-semialdehyde dehydrogenase</fullName>
        <ecNumber evidence="1">1.2.1.71</ecNumber>
    </recommendedName>
    <alternativeName>
        <fullName evidence="1">Succinylglutamic semialdehyde dehydrogenase</fullName>
        <shortName evidence="1">SGSD</shortName>
    </alternativeName>
</protein>